<accession>B0TQC1</accession>
<dbReference type="EMBL" id="CP000931">
    <property type="protein sequence ID" value="ABZ77713.1"/>
    <property type="molecule type" value="Genomic_DNA"/>
</dbReference>
<dbReference type="RefSeq" id="WP_012278236.1">
    <property type="nucleotide sequence ID" value="NC_010334.1"/>
</dbReference>
<dbReference type="SMR" id="B0TQC1"/>
<dbReference type="STRING" id="458817.Shal_3166"/>
<dbReference type="KEGG" id="shl:Shal_3166"/>
<dbReference type="eggNOG" id="COG0484">
    <property type="taxonomic scope" value="Bacteria"/>
</dbReference>
<dbReference type="HOGENOM" id="CLU_017633_0_7_6"/>
<dbReference type="OrthoDB" id="9779889at2"/>
<dbReference type="Proteomes" id="UP000001317">
    <property type="component" value="Chromosome"/>
</dbReference>
<dbReference type="GO" id="GO:0005737">
    <property type="term" value="C:cytoplasm"/>
    <property type="evidence" value="ECO:0007669"/>
    <property type="project" value="UniProtKB-SubCell"/>
</dbReference>
<dbReference type="GO" id="GO:0005524">
    <property type="term" value="F:ATP binding"/>
    <property type="evidence" value="ECO:0007669"/>
    <property type="project" value="InterPro"/>
</dbReference>
<dbReference type="GO" id="GO:0031072">
    <property type="term" value="F:heat shock protein binding"/>
    <property type="evidence" value="ECO:0007669"/>
    <property type="project" value="InterPro"/>
</dbReference>
<dbReference type="GO" id="GO:0051082">
    <property type="term" value="F:unfolded protein binding"/>
    <property type="evidence" value="ECO:0007669"/>
    <property type="project" value="UniProtKB-UniRule"/>
</dbReference>
<dbReference type="GO" id="GO:0008270">
    <property type="term" value="F:zinc ion binding"/>
    <property type="evidence" value="ECO:0007669"/>
    <property type="project" value="UniProtKB-UniRule"/>
</dbReference>
<dbReference type="GO" id="GO:0051085">
    <property type="term" value="P:chaperone cofactor-dependent protein refolding"/>
    <property type="evidence" value="ECO:0007669"/>
    <property type="project" value="TreeGrafter"/>
</dbReference>
<dbReference type="GO" id="GO:0006260">
    <property type="term" value="P:DNA replication"/>
    <property type="evidence" value="ECO:0007669"/>
    <property type="project" value="UniProtKB-KW"/>
</dbReference>
<dbReference type="GO" id="GO:0042026">
    <property type="term" value="P:protein refolding"/>
    <property type="evidence" value="ECO:0007669"/>
    <property type="project" value="TreeGrafter"/>
</dbReference>
<dbReference type="GO" id="GO:0009408">
    <property type="term" value="P:response to heat"/>
    <property type="evidence" value="ECO:0007669"/>
    <property type="project" value="InterPro"/>
</dbReference>
<dbReference type="CDD" id="cd06257">
    <property type="entry name" value="DnaJ"/>
    <property type="match status" value="1"/>
</dbReference>
<dbReference type="CDD" id="cd10747">
    <property type="entry name" value="DnaJ_C"/>
    <property type="match status" value="1"/>
</dbReference>
<dbReference type="CDD" id="cd10719">
    <property type="entry name" value="DnaJ_zf"/>
    <property type="match status" value="1"/>
</dbReference>
<dbReference type="FunFam" id="1.10.287.110:FF:000003">
    <property type="entry name" value="Molecular chaperone DnaJ"/>
    <property type="match status" value="1"/>
</dbReference>
<dbReference type="FunFam" id="2.10.230.10:FF:000002">
    <property type="entry name" value="Molecular chaperone DnaJ"/>
    <property type="match status" value="1"/>
</dbReference>
<dbReference type="FunFam" id="2.60.260.20:FF:000004">
    <property type="entry name" value="Molecular chaperone DnaJ"/>
    <property type="match status" value="1"/>
</dbReference>
<dbReference type="Gene3D" id="1.10.287.110">
    <property type="entry name" value="DnaJ domain"/>
    <property type="match status" value="1"/>
</dbReference>
<dbReference type="Gene3D" id="2.10.230.10">
    <property type="entry name" value="Heat shock protein DnaJ, cysteine-rich domain"/>
    <property type="match status" value="1"/>
</dbReference>
<dbReference type="Gene3D" id="2.60.260.20">
    <property type="entry name" value="Urease metallochaperone UreE, N-terminal domain"/>
    <property type="match status" value="2"/>
</dbReference>
<dbReference type="HAMAP" id="MF_01152">
    <property type="entry name" value="DnaJ"/>
    <property type="match status" value="1"/>
</dbReference>
<dbReference type="InterPro" id="IPR012724">
    <property type="entry name" value="DnaJ"/>
</dbReference>
<dbReference type="InterPro" id="IPR002939">
    <property type="entry name" value="DnaJ_C"/>
</dbReference>
<dbReference type="InterPro" id="IPR001623">
    <property type="entry name" value="DnaJ_domain"/>
</dbReference>
<dbReference type="InterPro" id="IPR018253">
    <property type="entry name" value="DnaJ_domain_CS"/>
</dbReference>
<dbReference type="InterPro" id="IPR008971">
    <property type="entry name" value="HSP40/DnaJ_pept-bd"/>
</dbReference>
<dbReference type="InterPro" id="IPR001305">
    <property type="entry name" value="HSP_DnaJ_Cys-rich_dom"/>
</dbReference>
<dbReference type="InterPro" id="IPR036410">
    <property type="entry name" value="HSP_DnaJ_Cys-rich_dom_sf"/>
</dbReference>
<dbReference type="InterPro" id="IPR036869">
    <property type="entry name" value="J_dom_sf"/>
</dbReference>
<dbReference type="NCBIfam" id="TIGR02349">
    <property type="entry name" value="DnaJ_bact"/>
    <property type="match status" value="1"/>
</dbReference>
<dbReference type="NCBIfam" id="NF008035">
    <property type="entry name" value="PRK10767.1"/>
    <property type="match status" value="1"/>
</dbReference>
<dbReference type="PANTHER" id="PTHR43096:SF48">
    <property type="entry name" value="CHAPERONE PROTEIN DNAJ"/>
    <property type="match status" value="1"/>
</dbReference>
<dbReference type="PANTHER" id="PTHR43096">
    <property type="entry name" value="DNAJ HOMOLOG 1, MITOCHONDRIAL-RELATED"/>
    <property type="match status" value="1"/>
</dbReference>
<dbReference type="Pfam" id="PF00226">
    <property type="entry name" value="DnaJ"/>
    <property type="match status" value="1"/>
</dbReference>
<dbReference type="Pfam" id="PF01556">
    <property type="entry name" value="DnaJ_C"/>
    <property type="match status" value="1"/>
</dbReference>
<dbReference type="Pfam" id="PF00684">
    <property type="entry name" value="DnaJ_CXXCXGXG"/>
    <property type="match status" value="1"/>
</dbReference>
<dbReference type="PRINTS" id="PR00625">
    <property type="entry name" value="JDOMAIN"/>
</dbReference>
<dbReference type="SMART" id="SM00271">
    <property type="entry name" value="DnaJ"/>
    <property type="match status" value="1"/>
</dbReference>
<dbReference type="SUPFAM" id="SSF46565">
    <property type="entry name" value="Chaperone J-domain"/>
    <property type="match status" value="1"/>
</dbReference>
<dbReference type="SUPFAM" id="SSF57938">
    <property type="entry name" value="DnaJ/Hsp40 cysteine-rich domain"/>
    <property type="match status" value="1"/>
</dbReference>
<dbReference type="SUPFAM" id="SSF49493">
    <property type="entry name" value="HSP40/DnaJ peptide-binding domain"/>
    <property type="match status" value="2"/>
</dbReference>
<dbReference type="PROSITE" id="PS00636">
    <property type="entry name" value="DNAJ_1"/>
    <property type="match status" value="1"/>
</dbReference>
<dbReference type="PROSITE" id="PS50076">
    <property type="entry name" value="DNAJ_2"/>
    <property type="match status" value="1"/>
</dbReference>
<dbReference type="PROSITE" id="PS51188">
    <property type="entry name" value="ZF_CR"/>
    <property type="match status" value="1"/>
</dbReference>
<name>DNAJ_SHEHH</name>
<gene>
    <name evidence="1" type="primary">dnaJ</name>
    <name type="ordered locus">Shal_3166</name>
</gene>
<organism>
    <name type="scientific">Shewanella halifaxensis (strain HAW-EB4)</name>
    <dbReference type="NCBI Taxonomy" id="458817"/>
    <lineage>
        <taxon>Bacteria</taxon>
        <taxon>Pseudomonadati</taxon>
        <taxon>Pseudomonadota</taxon>
        <taxon>Gammaproteobacteria</taxon>
        <taxon>Alteromonadales</taxon>
        <taxon>Shewanellaceae</taxon>
        <taxon>Shewanella</taxon>
    </lineage>
</organism>
<protein>
    <recommendedName>
        <fullName evidence="1">Chaperone protein DnaJ</fullName>
    </recommendedName>
</protein>
<proteinExistence type="inferred from homology"/>
<feature type="chain" id="PRO_1000085292" description="Chaperone protein DnaJ">
    <location>
        <begin position="1"/>
        <end position="376"/>
    </location>
</feature>
<feature type="domain" description="J" evidence="1">
    <location>
        <begin position="5"/>
        <end position="70"/>
    </location>
</feature>
<feature type="repeat" description="CXXCXGXG motif">
    <location>
        <begin position="145"/>
        <end position="152"/>
    </location>
</feature>
<feature type="repeat" description="CXXCXGXG motif">
    <location>
        <begin position="162"/>
        <end position="169"/>
    </location>
</feature>
<feature type="repeat" description="CXXCXGXG motif">
    <location>
        <begin position="184"/>
        <end position="191"/>
    </location>
</feature>
<feature type="repeat" description="CXXCXGXG motif">
    <location>
        <begin position="198"/>
        <end position="205"/>
    </location>
</feature>
<feature type="zinc finger region" description="CR-type" evidence="1">
    <location>
        <begin position="132"/>
        <end position="210"/>
    </location>
</feature>
<feature type="binding site" evidence="1">
    <location>
        <position position="145"/>
    </location>
    <ligand>
        <name>Zn(2+)</name>
        <dbReference type="ChEBI" id="CHEBI:29105"/>
        <label>1</label>
    </ligand>
</feature>
<feature type="binding site" evidence="1">
    <location>
        <position position="148"/>
    </location>
    <ligand>
        <name>Zn(2+)</name>
        <dbReference type="ChEBI" id="CHEBI:29105"/>
        <label>1</label>
    </ligand>
</feature>
<feature type="binding site" evidence="1">
    <location>
        <position position="162"/>
    </location>
    <ligand>
        <name>Zn(2+)</name>
        <dbReference type="ChEBI" id="CHEBI:29105"/>
        <label>2</label>
    </ligand>
</feature>
<feature type="binding site" evidence="1">
    <location>
        <position position="165"/>
    </location>
    <ligand>
        <name>Zn(2+)</name>
        <dbReference type="ChEBI" id="CHEBI:29105"/>
        <label>2</label>
    </ligand>
</feature>
<feature type="binding site" evidence="1">
    <location>
        <position position="184"/>
    </location>
    <ligand>
        <name>Zn(2+)</name>
        <dbReference type="ChEBI" id="CHEBI:29105"/>
        <label>2</label>
    </ligand>
</feature>
<feature type="binding site" evidence="1">
    <location>
        <position position="187"/>
    </location>
    <ligand>
        <name>Zn(2+)</name>
        <dbReference type="ChEBI" id="CHEBI:29105"/>
        <label>2</label>
    </ligand>
</feature>
<feature type="binding site" evidence="1">
    <location>
        <position position="198"/>
    </location>
    <ligand>
        <name>Zn(2+)</name>
        <dbReference type="ChEBI" id="CHEBI:29105"/>
        <label>1</label>
    </ligand>
</feature>
<feature type="binding site" evidence="1">
    <location>
        <position position="201"/>
    </location>
    <ligand>
        <name>Zn(2+)</name>
        <dbReference type="ChEBI" id="CHEBI:29105"/>
        <label>1</label>
    </ligand>
</feature>
<sequence length="376" mass="40761">MSKRDFYEVLGVGRDASEREIKKAYKRLAMKFHPDRNPGNKEAEASFKEVKEAYEILTDGDKKAAYDQFGHAGVDPNRGGGGFGGGADFGDVFGDVFGDIFGGGRRGGQRQAARGSDLRYNLELSLEEAVRGLTKELRIPTLAACDACDGSGAKKGSSPTTCGTCHGQGQVQMRQGFFAVQQACPTCHGRGKIIKDPCNKCHGEGRVEKSKTLSVKIPAGVDTGDRIRLSGEGEAGEYGAPPGDLYVQVSVREHAIFQRDGNNLYCEVPISFSKAALGGEIEVPTLDGKVNLKIPAETQTGRMFRMRGKGVKSVRSHAVGDLLCKVVMETPVNLNERQKELLREFEDTLTGQSKKHSPKAEGFFDGVKKFFQDLNS</sequence>
<keyword id="KW-0143">Chaperone</keyword>
<keyword id="KW-0963">Cytoplasm</keyword>
<keyword id="KW-0235">DNA replication</keyword>
<keyword id="KW-0479">Metal-binding</keyword>
<keyword id="KW-0677">Repeat</keyword>
<keyword id="KW-0346">Stress response</keyword>
<keyword id="KW-0862">Zinc</keyword>
<keyword id="KW-0863">Zinc-finger</keyword>
<comment type="function">
    <text evidence="1">Participates actively in the response to hyperosmotic and heat shock by preventing the aggregation of stress-denatured proteins and by disaggregating proteins, also in an autonomous, DnaK-independent fashion. Unfolded proteins bind initially to DnaJ; upon interaction with the DnaJ-bound protein, DnaK hydrolyzes its bound ATP, resulting in the formation of a stable complex. GrpE releases ADP from DnaK; ATP binding to DnaK triggers the release of the substrate protein, thus completing the reaction cycle. Several rounds of ATP-dependent interactions between DnaJ, DnaK and GrpE are required for fully efficient folding. Also involved, together with DnaK and GrpE, in the DNA replication of plasmids through activation of initiation proteins.</text>
</comment>
<comment type="cofactor">
    <cofactor evidence="1">
        <name>Zn(2+)</name>
        <dbReference type="ChEBI" id="CHEBI:29105"/>
    </cofactor>
    <text evidence="1">Binds 2 Zn(2+) ions per monomer.</text>
</comment>
<comment type="subunit">
    <text evidence="1">Homodimer.</text>
</comment>
<comment type="subcellular location">
    <subcellularLocation>
        <location evidence="1">Cytoplasm</location>
    </subcellularLocation>
</comment>
<comment type="domain">
    <text evidence="1">The J domain is necessary and sufficient to stimulate DnaK ATPase activity. Zinc center 1 plays an important role in the autonomous, DnaK-independent chaperone activity of DnaJ. Zinc center 2 is essential for interaction with DnaK and for DnaJ activity.</text>
</comment>
<comment type="similarity">
    <text evidence="1">Belongs to the DnaJ family.</text>
</comment>
<evidence type="ECO:0000255" key="1">
    <source>
        <dbReference type="HAMAP-Rule" id="MF_01152"/>
    </source>
</evidence>
<reference key="1">
    <citation type="submission" date="2008-01" db="EMBL/GenBank/DDBJ databases">
        <title>Complete sequence of Shewanella halifaxensis HAW-EB4.</title>
        <authorList>
            <consortium name="US DOE Joint Genome Institute"/>
            <person name="Copeland A."/>
            <person name="Lucas S."/>
            <person name="Lapidus A."/>
            <person name="Glavina del Rio T."/>
            <person name="Dalin E."/>
            <person name="Tice H."/>
            <person name="Bruce D."/>
            <person name="Goodwin L."/>
            <person name="Pitluck S."/>
            <person name="Sims D."/>
            <person name="Brettin T."/>
            <person name="Detter J.C."/>
            <person name="Han C."/>
            <person name="Kuske C.R."/>
            <person name="Schmutz J."/>
            <person name="Larimer F."/>
            <person name="Land M."/>
            <person name="Hauser L."/>
            <person name="Kyrpides N."/>
            <person name="Kim E."/>
            <person name="Zhao J.-S."/>
            <person name="Richardson P."/>
        </authorList>
    </citation>
    <scope>NUCLEOTIDE SEQUENCE [LARGE SCALE GENOMIC DNA]</scope>
    <source>
        <strain>HAW-EB4</strain>
    </source>
</reference>